<keyword id="KW-0028">Amino-acid biosynthesis</keyword>
<keyword id="KW-0963">Cytoplasm</keyword>
<keyword id="KW-0521">NADP</keyword>
<keyword id="KW-0560">Oxidoreductase</keyword>
<keyword id="KW-0641">Proline biosynthesis</keyword>
<dbReference type="EC" id="1.2.1.41" evidence="1"/>
<dbReference type="EMBL" id="CP000644">
    <property type="protein sequence ID" value="ABO89028.1"/>
    <property type="molecule type" value="Genomic_DNA"/>
</dbReference>
<dbReference type="RefSeq" id="WP_005317848.1">
    <property type="nucleotide sequence ID" value="NC_009348.1"/>
</dbReference>
<dbReference type="SMR" id="A4SJF6"/>
<dbReference type="STRING" id="29491.GCA_000820065_02370"/>
<dbReference type="KEGG" id="asa:ASA_0894"/>
<dbReference type="PATRIC" id="fig|382245.13.peg.884"/>
<dbReference type="eggNOG" id="COG0014">
    <property type="taxonomic scope" value="Bacteria"/>
</dbReference>
<dbReference type="HOGENOM" id="CLU_030231_0_0_6"/>
<dbReference type="UniPathway" id="UPA00098">
    <property type="reaction ID" value="UER00360"/>
</dbReference>
<dbReference type="Proteomes" id="UP000000225">
    <property type="component" value="Chromosome"/>
</dbReference>
<dbReference type="GO" id="GO:0005737">
    <property type="term" value="C:cytoplasm"/>
    <property type="evidence" value="ECO:0007669"/>
    <property type="project" value="UniProtKB-SubCell"/>
</dbReference>
<dbReference type="GO" id="GO:0004350">
    <property type="term" value="F:glutamate-5-semialdehyde dehydrogenase activity"/>
    <property type="evidence" value="ECO:0007669"/>
    <property type="project" value="UniProtKB-UniRule"/>
</dbReference>
<dbReference type="GO" id="GO:0050661">
    <property type="term" value="F:NADP binding"/>
    <property type="evidence" value="ECO:0007669"/>
    <property type="project" value="InterPro"/>
</dbReference>
<dbReference type="GO" id="GO:0055129">
    <property type="term" value="P:L-proline biosynthetic process"/>
    <property type="evidence" value="ECO:0007669"/>
    <property type="project" value="UniProtKB-UniRule"/>
</dbReference>
<dbReference type="CDD" id="cd07079">
    <property type="entry name" value="ALDH_F18-19_ProA-GPR"/>
    <property type="match status" value="1"/>
</dbReference>
<dbReference type="FunFam" id="3.40.309.10:FF:000028">
    <property type="entry name" value="Gamma-glutamyl phosphate reductase"/>
    <property type="match status" value="1"/>
</dbReference>
<dbReference type="Gene3D" id="3.40.605.10">
    <property type="entry name" value="Aldehyde Dehydrogenase, Chain A, domain 1"/>
    <property type="match status" value="1"/>
</dbReference>
<dbReference type="Gene3D" id="3.40.309.10">
    <property type="entry name" value="Aldehyde Dehydrogenase, Chain A, domain 2"/>
    <property type="match status" value="1"/>
</dbReference>
<dbReference type="HAMAP" id="MF_00412">
    <property type="entry name" value="ProA"/>
    <property type="match status" value="1"/>
</dbReference>
<dbReference type="InterPro" id="IPR016161">
    <property type="entry name" value="Ald_DH/histidinol_DH"/>
</dbReference>
<dbReference type="InterPro" id="IPR016163">
    <property type="entry name" value="Ald_DH_C"/>
</dbReference>
<dbReference type="InterPro" id="IPR016162">
    <property type="entry name" value="Ald_DH_N"/>
</dbReference>
<dbReference type="InterPro" id="IPR015590">
    <property type="entry name" value="Aldehyde_DH_dom"/>
</dbReference>
<dbReference type="InterPro" id="IPR020593">
    <property type="entry name" value="G-glutamylP_reductase_CS"/>
</dbReference>
<dbReference type="InterPro" id="IPR012134">
    <property type="entry name" value="Glu-5-SA_DH"/>
</dbReference>
<dbReference type="InterPro" id="IPR000965">
    <property type="entry name" value="GPR_dom"/>
</dbReference>
<dbReference type="NCBIfam" id="NF001221">
    <property type="entry name" value="PRK00197.1"/>
    <property type="match status" value="1"/>
</dbReference>
<dbReference type="NCBIfam" id="TIGR00407">
    <property type="entry name" value="proA"/>
    <property type="match status" value="1"/>
</dbReference>
<dbReference type="PANTHER" id="PTHR11063:SF8">
    <property type="entry name" value="DELTA-1-PYRROLINE-5-CARBOXYLATE SYNTHASE"/>
    <property type="match status" value="1"/>
</dbReference>
<dbReference type="PANTHER" id="PTHR11063">
    <property type="entry name" value="GLUTAMATE SEMIALDEHYDE DEHYDROGENASE"/>
    <property type="match status" value="1"/>
</dbReference>
<dbReference type="Pfam" id="PF00171">
    <property type="entry name" value="Aldedh"/>
    <property type="match status" value="1"/>
</dbReference>
<dbReference type="PIRSF" id="PIRSF000151">
    <property type="entry name" value="GPR"/>
    <property type="match status" value="1"/>
</dbReference>
<dbReference type="SUPFAM" id="SSF53720">
    <property type="entry name" value="ALDH-like"/>
    <property type="match status" value="1"/>
</dbReference>
<dbReference type="PROSITE" id="PS01223">
    <property type="entry name" value="PROA"/>
    <property type="match status" value="1"/>
</dbReference>
<reference key="1">
    <citation type="journal article" date="2008" name="BMC Genomics">
        <title>The genome of Aeromonas salmonicida subsp. salmonicida A449: insights into the evolution of a fish pathogen.</title>
        <authorList>
            <person name="Reith M.E."/>
            <person name="Singh R.K."/>
            <person name="Curtis B."/>
            <person name="Boyd J.M."/>
            <person name="Bouevitch A."/>
            <person name="Kimball J."/>
            <person name="Munholland J."/>
            <person name="Murphy C."/>
            <person name="Sarty D."/>
            <person name="Williams J."/>
            <person name="Nash J.H."/>
            <person name="Johnson S.C."/>
            <person name="Brown L.L."/>
        </authorList>
    </citation>
    <scope>NUCLEOTIDE SEQUENCE [LARGE SCALE GENOMIC DNA]</scope>
    <source>
        <strain>A449</strain>
    </source>
</reference>
<sequence>MSLEKMGQAAREAAYQLATISTAQKNWALAAIADELEARSSQILAANDKDIAAGREAGLSEAMLDRLLLNPARLAGIVADVRKVITLDDPVGAEIDCRVLENGLRLSRRRVPIGVIGVIYEARPNVTIDIASLCLKTGNASMLRGGRETFHSNLELVRVIQAALAASGLPAEAVQYIDNPDRALVGELLRLDRYVDMIIPRGGAGLHKMCKENSSIPVIIGGFGISHVFVDESADPVRSLAVIENAKVQRPSACNALDTLLVHKKIAASFLPQLVRLMNERQVTLVAAPNAMSLLAGADNLCEAGPEDFDTEWLGLTLGIKLVADVNEALAHMREHNAGHSDAILTNDLANAERFVNGAGSAAVYVNASTRFTDGGQFGLGAEVAVSTQMLHARGPMGLTELTSYKWVGLADYLICA</sequence>
<organism>
    <name type="scientific">Aeromonas salmonicida (strain A449)</name>
    <dbReference type="NCBI Taxonomy" id="382245"/>
    <lineage>
        <taxon>Bacteria</taxon>
        <taxon>Pseudomonadati</taxon>
        <taxon>Pseudomonadota</taxon>
        <taxon>Gammaproteobacteria</taxon>
        <taxon>Aeromonadales</taxon>
        <taxon>Aeromonadaceae</taxon>
        <taxon>Aeromonas</taxon>
    </lineage>
</organism>
<name>PROA_AERS4</name>
<gene>
    <name evidence="1" type="primary">proA</name>
    <name type="ordered locus">ASA_0894</name>
</gene>
<evidence type="ECO:0000255" key="1">
    <source>
        <dbReference type="HAMAP-Rule" id="MF_00412"/>
    </source>
</evidence>
<protein>
    <recommendedName>
        <fullName evidence="1">Gamma-glutamyl phosphate reductase</fullName>
        <shortName evidence="1">GPR</shortName>
        <ecNumber evidence="1">1.2.1.41</ecNumber>
    </recommendedName>
    <alternativeName>
        <fullName evidence="1">Glutamate-5-semialdehyde dehydrogenase</fullName>
    </alternativeName>
    <alternativeName>
        <fullName evidence="1">Glutamyl-gamma-semialdehyde dehydrogenase</fullName>
        <shortName evidence="1">GSA dehydrogenase</shortName>
    </alternativeName>
</protein>
<comment type="function">
    <text evidence="1">Catalyzes the NADPH-dependent reduction of L-glutamate 5-phosphate into L-glutamate 5-semialdehyde and phosphate. The product spontaneously undergoes cyclization to form 1-pyrroline-5-carboxylate.</text>
</comment>
<comment type="catalytic activity">
    <reaction evidence="1">
        <text>L-glutamate 5-semialdehyde + phosphate + NADP(+) = L-glutamyl 5-phosphate + NADPH + H(+)</text>
        <dbReference type="Rhea" id="RHEA:19541"/>
        <dbReference type="ChEBI" id="CHEBI:15378"/>
        <dbReference type="ChEBI" id="CHEBI:43474"/>
        <dbReference type="ChEBI" id="CHEBI:57783"/>
        <dbReference type="ChEBI" id="CHEBI:58066"/>
        <dbReference type="ChEBI" id="CHEBI:58274"/>
        <dbReference type="ChEBI" id="CHEBI:58349"/>
        <dbReference type="EC" id="1.2.1.41"/>
    </reaction>
</comment>
<comment type="pathway">
    <text evidence="1">Amino-acid biosynthesis; L-proline biosynthesis; L-glutamate 5-semialdehyde from L-glutamate: step 2/2.</text>
</comment>
<comment type="subcellular location">
    <subcellularLocation>
        <location evidence="1">Cytoplasm</location>
    </subcellularLocation>
</comment>
<comment type="similarity">
    <text evidence="1">Belongs to the gamma-glutamyl phosphate reductase family.</text>
</comment>
<feature type="chain" id="PRO_1000049933" description="Gamma-glutamyl phosphate reductase">
    <location>
        <begin position="1"/>
        <end position="417"/>
    </location>
</feature>
<proteinExistence type="inferred from homology"/>
<accession>A4SJF6</accession>